<name>ARC_ACIFD</name>
<keyword id="KW-0067">ATP-binding</keyword>
<keyword id="KW-0143">Chaperone</keyword>
<keyword id="KW-0175">Coiled coil</keyword>
<keyword id="KW-0547">Nucleotide-binding</keyword>
<keyword id="KW-0647">Proteasome</keyword>
<keyword id="KW-1185">Reference proteome</keyword>
<protein>
    <recommendedName>
        <fullName evidence="1">Proteasome-associated ATPase</fullName>
    </recommendedName>
    <alternativeName>
        <fullName evidence="1">AAA ATPase forming ring-shaped complexes</fullName>
        <shortName evidence="1">ARC</shortName>
    </alternativeName>
    <alternativeName>
        <fullName evidence="1">Proteasomal ATPase</fullName>
    </alternativeName>
</protein>
<reference key="1">
    <citation type="journal article" date="2009" name="Stand. Genomic Sci.">
        <title>Complete genome sequence of Acidimicrobium ferrooxidans type strain (ICP).</title>
        <authorList>
            <person name="Clum A."/>
            <person name="Nolan M."/>
            <person name="Lang E."/>
            <person name="Glavina Del Rio T."/>
            <person name="Tice H."/>
            <person name="Copeland A."/>
            <person name="Cheng J.F."/>
            <person name="Lucas S."/>
            <person name="Chen F."/>
            <person name="Bruce D."/>
            <person name="Goodwin L."/>
            <person name="Pitluck S."/>
            <person name="Ivanova N."/>
            <person name="Mavrommatis K."/>
            <person name="Mikhailova N."/>
            <person name="Pati A."/>
            <person name="Chen A."/>
            <person name="Palaniappan K."/>
            <person name="Goker M."/>
            <person name="Spring S."/>
            <person name="Land M."/>
            <person name="Hauser L."/>
            <person name="Chang Y.J."/>
            <person name="Jeffries C.C."/>
            <person name="Chain P."/>
            <person name="Bristow J."/>
            <person name="Eisen J.A."/>
            <person name="Markowitz V."/>
            <person name="Hugenholtz P."/>
            <person name="Kyrpides N.C."/>
            <person name="Klenk H.P."/>
            <person name="Lapidus A."/>
        </authorList>
    </citation>
    <scope>NUCLEOTIDE SEQUENCE [LARGE SCALE GENOMIC DNA]</scope>
    <source>
        <strain>DSM 10331 / JCM 15462 / NBRC 103882 / ICP</strain>
    </source>
</reference>
<evidence type="ECO:0000255" key="1">
    <source>
        <dbReference type="HAMAP-Rule" id="MF_02112"/>
    </source>
</evidence>
<evidence type="ECO:0000256" key="2">
    <source>
        <dbReference type="SAM" id="MobiDB-lite"/>
    </source>
</evidence>
<comment type="function">
    <text evidence="1">ATPase which is responsible for recognizing, binding, unfolding and translocation of pupylated proteins into the bacterial 20S proteasome core particle. May be essential for opening the gate of the 20S proteasome via an interaction with its C-terminus, thereby allowing substrate entry and access to the site of proteolysis. Thus, the C-termini of the proteasomal ATPase may function like a 'key in a lock' to induce gate opening and therefore regulate proteolysis.</text>
</comment>
<comment type="pathway">
    <text evidence="1">Protein degradation; proteasomal Pup-dependent pathway.</text>
</comment>
<comment type="subunit">
    <text evidence="1">Homohexamer. Assembles into a hexameric ring structure that caps the 20S proteasome core. Strongly interacts with the prokaryotic ubiquitin-like protein Pup through a hydrophobic interface; the interacting region of ARC lies in its N-terminal coiled-coil domain. There is one Pup binding site per ARC hexamer ring. Upon ATP-binding, the C-terminus of ARC interacts with the alpha-rings of the proteasome core, possibly by binding to the intersubunit pockets.</text>
</comment>
<comment type="domain">
    <text evidence="1">Consists of three main regions, an N-terminal coiled-coil domain that binds to protein Pup and functions as a docking station, an interdomain involved in ARC hexamerization, and a C-terminal ATPase domain of the AAA type.</text>
</comment>
<comment type="similarity">
    <text evidence="1">Belongs to the AAA ATPase family.</text>
</comment>
<feature type="chain" id="PRO_0000396956" description="Proteasome-associated ATPase">
    <location>
        <begin position="1"/>
        <end position="579"/>
    </location>
</feature>
<feature type="region of interest" description="Disordered" evidence="2">
    <location>
        <begin position="1"/>
        <end position="21"/>
    </location>
</feature>
<feature type="region of interest" description="Docks into pockets in the proteasome alpha-ring" evidence="1">
    <location>
        <begin position="578"/>
        <end position="579"/>
    </location>
</feature>
<feature type="coiled-coil region" evidence="1">
    <location>
        <begin position="8"/>
        <end position="86"/>
    </location>
</feature>
<feature type="binding site" evidence="1">
    <location>
        <begin position="268"/>
        <end position="273"/>
    </location>
    <ligand>
        <name>ATP</name>
        <dbReference type="ChEBI" id="CHEBI:30616"/>
    </ligand>
</feature>
<sequence>MPRDETPEREHAEQQSRQALEEEVRELRRRVEEAPSRVRALEEKLLEVSGALAQTQAKNEKLTFTLQQAREHIQNLREEVEKLTQPPSAYGVYLAANQDGTADVFTTGRKMRVAVHPEIDLAAVRVGQEVVLNESFAIVSVRGSDVIGEVATVKDVLDDGSRVILLGRADEERVAQVAGHLQHPPLRVGDSVMVDPRSAMVLERLPRPEVSELALEEVPDITYHDIGGLDRQIEEIQDAVELPFLYRELFGDYRLPAPKGILLYGPPGCGKTLIAKAVANSLAKKVEQVSGRSVRSYFLNVKGPELLNKYVGETERQIRLIFQRAREKAEEGVPVIVFFDEMDSLFRTRGSGISSDMESTVVPQLLAEIDGVEALRNVIVIGASNREDLIDPAILRPGRLDVKIKIERPDEQAAREIFARYLTPEVPIDAGEVTTLGGGDAEKAIAVMIERTVERMYATSDENRFLEVTYQNGEKEILYFKDFSSGAMIENIVRRAKKLAIKREIAGGSRGICLDDLLASIAKEFKEHEDLPNTTNPDDWAKISGRKGERIVFMRILLHEEEGQTGGRAIERVATGQYL</sequence>
<accession>C7LYP4</accession>
<proteinExistence type="inferred from homology"/>
<gene>
    <name evidence="1" type="primary">arc</name>
    <name type="ordered locus">Afer_0907</name>
</gene>
<organism>
    <name type="scientific">Acidimicrobium ferrooxidans (strain DSM 10331 / JCM 15462 / NBRC 103882 / ICP)</name>
    <dbReference type="NCBI Taxonomy" id="525909"/>
    <lineage>
        <taxon>Bacteria</taxon>
        <taxon>Bacillati</taxon>
        <taxon>Actinomycetota</taxon>
        <taxon>Acidimicrobiia</taxon>
        <taxon>Acidimicrobiales</taxon>
        <taxon>Acidimicrobiaceae</taxon>
        <taxon>Acidimicrobium</taxon>
    </lineage>
</organism>
<dbReference type="EMBL" id="CP001631">
    <property type="protein sequence ID" value="ACU53852.1"/>
    <property type="molecule type" value="Genomic_DNA"/>
</dbReference>
<dbReference type="RefSeq" id="WP_015798341.1">
    <property type="nucleotide sequence ID" value="NC_013124.1"/>
</dbReference>
<dbReference type="SMR" id="C7LYP4"/>
<dbReference type="STRING" id="525909.Afer_0907"/>
<dbReference type="KEGG" id="afo:Afer_0907"/>
<dbReference type="eggNOG" id="COG1222">
    <property type="taxonomic scope" value="Bacteria"/>
</dbReference>
<dbReference type="HOGENOM" id="CLU_036054_0_0_11"/>
<dbReference type="OrthoDB" id="9809379at2"/>
<dbReference type="UniPathway" id="UPA00997"/>
<dbReference type="Proteomes" id="UP000000771">
    <property type="component" value="Chromosome"/>
</dbReference>
<dbReference type="GO" id="GO:0000502">
    <property type="term" value="C:proteasome complex"/>
    <property type="evidence" value="ECO:0007669"/>
    <property type="project" value="UniProtKB-KW"/>
</dbReference>
<dbReference type="GO" id="GO:0005524">
    <property type="term" value="F:ATP binding"/>
    <property type="evidence" value="ECO:0007669"/>
    <property type="project" value="UniProtKB-UniRule"/>
</dbReference>
<dbReference type="GO" id="GO:0016887">
    <property type="term" value="F:ATP hydrolysis activity"/>
    <property type="evidence" value="ECO:0007669"/>
    <property type="project" value="UniProtKB-UniRule"/>
</dbReference>
<dbReference type="GO" id="GO:0019941">
    <property type="term" value="P:modification-dependent protein catabolic process"/>
    <property type="evidence" value="ECO:0007669"/>
    <property type="project" value="InterPro"/>
</dbReference>
<dbReference type="GO" id="GO:0010498">
    <property type="term" value="P:proteasomal protein catabolic process"/>
    <property type="evidence" value="ECO:0007669"/>
    <property type="project" value="InterPro"/>
</dbReference>
<dbReference type="FunFam" id="3.40.50.300:FF:001025">
    <property type="entry name" value="ATPase family, AAA domain-containing 2B"/>
    <property type="match status" value="1"/>
</dbReference>
<dbReference type="Gene3D" id="1.10.8.60">
    <property type="match status" value="1"/>
</dbReference>
<dbReference type="Gene3D" id="1.20.5.170">
    <property type="match status" value="1"/>
</dbReference>
<dbReference type="Gene3D" id="2.40.50.140">
    <property type="entry name" value="Nucleic acid-binding proteins"/>
    <property type="match status" value="2"/>
</dbReference>
<dbReference type="Gene3D" id="3.40.50.300">
    <property type="entry name" value="P-loop containing nucleotide triphosphate hydrolases"/>
    <property type="match status" value="1"/>
</dbReference>
<dbReference type="HAMAP" id="MF_02112">
    <property type="entry name" value="ARC_ATPase"/>
    <property type="match status" value="1"/>
</dbReference>
<dbReference type="InterPro" id="IPR003593">
    <property type="entry name" value="AAA+_ATPase"/>
</dbReference>
<dbReference type="InterPro" id="IPR050168">
    <property type="entry name" value="AAA_ATPase_domain"/>
</dbReference>
<dbReference type="InterPro" id="IPR003959">
    <property type="entry name" value="ATPase_AAA_core"/>
</dbReference>
<dbReference type="InterPro" id="IPR003960">
    <property type="entry name" value="ATPase_AAA_CS"/>
</dbReference>
<dbReference type="InterPro" id="IPR012340">
    <property type="entry name" value="NA-bd_OB-fold"/>
</dbReference>
<dbReference type="InterPro" id="IPR027417">
    <property type="entry name" value="P-loop_NTPase"/>
</dbReference>
<dbReference type="InterPro" id="IPR032501">
    <property type="entry name" value="Prot_ATP_ID_OB_2nd"/>
</dbReference>
<dbReference type="InterPro" id="IPR041626">
    <property type="entry name" value="Prot_ATP_ID_OB_N"/>
</dbReference>
<dbReference type="InterPro" id="IPR022482">
    <property type="entry name" value="Proteasome_ATPase"/>
</dbReference>
<dbReference type="NCBIfam" id="TIGR03689">
    <property type="entry name" value="pup_AAA"/>
    <property type="match status" value="1"/>
</dbReference>
<dbReference type="PANTHER" id="PTHR23077">
    <property type="entry name" value="AAA-FAMILY ATPASE"/>
    <property type="match status" value="1"/>
</dbReference>
<dbReference type="PANTHER" id="PTHR23077:SF144">
    <property type="entry name" value="PROTEASOME-ASSOCIATED ATPASE"/>
    <property type="match status" value="1"/>
</dbReference>
<dbReference type="Pfam" id="PF00004">
    <property type="entry name" value="AAA"/>
    <property type="match status" value="1"/>
</dbReference>
<dbReference type="Pfam" id="PF16450">
    <property type="entry name" value="Prot_ATP_ID_OB_C"/>
    <property type="match status" value="1"/>
</dbReference>
<dbReference type="Pfam" id="PF17758">
    <property type="entry name" value="Prot_ATP_ID_OB_N"/>
    <property type="match status" value="1"/>
</dbReference>
<dbReference type="SMART" id="SM00382">
    <property type="entry name" value="AAA"/>
    <property type="match status" value="1"/>
</dbReference>
<dbReference type="SUPFAM" id="SSF52540">
    <property type="entry name" value="P-loop containing nucleoside triphosphate hydrolases"/>
    <property type="match status" value="1"/>
</dbReference>
<dbReference type="PROSITE" id="PS00674">
    <property type="entry name" value="AAA"/>
    <property type="match status" value="1"/>
</dbReference>